<dbReference type="EC" id="3.5.4.16" evidence="1"/>
<dbReference type="EMBL" id="AP008934">
    <property type="protein sequence ID" value="BAE19297.1"/>
    <property type="molecule type" value="Genomic_DNA"/>
</dbReference>
<dbReference type="RefSeq" id="WP_002484093.1">
    <property type="nucleotide sequence ID" value="NZ_MTGA01000039.1"/>
</dbReference>
<dbReference type="SMR" id="Q49VB3"/>
<dbReference type="GeneID" id="66868304"/>
<dbReference type="KEGG" id="ssp:SSP2152"/>
<dbReference type="eggNOG" id="COG1469">
    <property type="taxonomic scope" value="Bacteria"/>
</dbReference>
<dbReference type="HOGENOM" id="CLU_062816_1_1_9"/>
<dbReference type="OrthoDB" id="9774824at2"/>
<dbReference type="UniPathway" id="UPA00848">
    <property type="reaction ID" value="UER00151"/>
</dbReference>
<dbReference type="Proteomes" id="UP000006371">
    <property type="component" value="Chromosome"/>
</dbReference>
<dbReference type="GO" id="GO:0003934">
    <property type="term" value="F:GTP cyclohydrolase I activity"/>
    <property type="evidence" value="ECO:0007669"/>
    <property type="project" value="UniProtKB-UniRule"/>
</dbReference>
<dbReference type="GO" id="GO:0046654">
    <property type="term" value="P:tetrahydrofolate biosynthetic process"/>
    <property type="evidence" value="ECO:0007669"/>
    <property type="project" value="UniProtKB-UniRule"/>
</dbReference>
<dbReference type="Gene3D" id="3.10.270.10">
    <property type="entry name" value="Urate Oxidase"/>
    <property type="match status" value="1"/>
</dbReference>
<dbReference type="HAMAP" id="MF_01527_B">
    <property type="entry name" value="GTP_cyclohydrol_B"/>
    <property type="match status" value="1"/>
</dbReference>
<dbReference type="InterPro" id="IPR022838">
    <property type="entry name" value="GTP_cyclohydrolase_FolE2"/>
</dbReference>
<dbReference type="InterPro" id="IPR003801">
    <property type="entry name" value="GTP_cyclohydrolase_FolE2/MptA"/>
</dbReference>
<dbReference type="NCBIfam" id="NF010200">
    <property type="entry name" value="PRK13674.1-1"/>
    <property type="match status" value="1"/>
</dbReference>
<dbReference type="PANTHER" id="PTHR36445">
    <property type="entry name" value="GTP CYCLOHYDROLASE MPTA"/>
    <property type="match status" value="1"/>
</dbReference>
<dbReference type="PANTHER" id="PTHR36445:SF1">
    <property type="entry name" value="GTP CYCLOHYDROLASE MPTA"/>
    <property type="match status" value="1"/>
</dbReference>
<dbReference type="Pfam" id="PF02649">
    <property type="entry name" value="GCHY-1"/>
    <property type="match status" value="1"/>
</dbReference>
<gene>
    <name evidence="1" type="primary">folE2</name>
    <name type="ordered locus">SSP2152</name>
</gene>
<reference key="1">
    <citation type="journal article" date="2005" name="Proc. Natl. Acad. Sci. U.S.A.">
        <title>Whole genome sequence of Staphylococcus saprophyticus reveals the pathogenesis of uncomplicated urinary tract infection.</title>
        <authorList>
            <person name="Kuroda M."/>
            <person name="Yamashita A."/>
            <person name="Hirakawa H."/>
            <person name="Kumano M."/>
            <person name="Morikawa K."/>
            <person name="Higashide M."/>
            <person name="Maruyama A."/>
            <person name="Inose Y."/>
            <person name="Matoba K."/>
            <person name="Toh H."/>
            <person name="Kuhara S."/>
            <person name="Hattori M."/>
            <person name="Ohta T."/>
        </authorList>
    </citation>
    <scope>NUCLEOTIDE SEQUENCE [LARGE SCALE GENOMIC DNA]</scope>
    <source>
        <strain>ATCC 15305 / DSM 20229 / NCIMB 8711 / NCTC 7292 / S-41</strain>
    </source>
</reference>
<proteinExistence type="inferred from homology"/>
<comment type="function">
    <text evidence="1">Converts GTP to 7,8-dihydroneopterin triphosphate.</text>
</comment>
<comment type="catalytic activity">
    <reaction evidence="1">
        <text>GTP + H2O = 7,8-dihydroneopterin 3'-triphosphate + formate + H(+)</text>
        <dbReference type="Rhea" id="RHEA:17473"/>
        <dbReference type="ChEBI" id="CHEBI:15377"/>
        <dbReference type="ChEBI" id="CHEBI:15378"/>
        <dbReference type="ChEBI" id="CHEBI:15740"/>
        <dbReference type="ChEBI" id="CHEBI:37565"/>
        <dbReference type="ChEBI" id="CHEBI:58462"/>
        <dbReference type="EC" id="3.5.4.16"/>
    </reaction>
</comment>
<comment type="pathway">
    <text evidence="1">Cofactor biosynthesis; 7,8-dihydroneopterin triphosphate biosynthesis; 7,8-dihydroneopterin triphosphate from GTP: step 1/1.</text>
</comment>
<comment type="similarity">
    <text evidence="1">Belongs to the GTP cyclohydrolase IV family.</text>
</comment>
<evidence type="ECO:0000255" key="1">
    <source>
        <dbReference type="HAMAP-Rule" id="MF_01527"/>
    </source>
</evidence>
<keyword id="KW-0378">Hydrolase</keyword>
<keyword id="KW-1185">Reference proteome</keyword>
<feature type="chain" id="PRO_0000289526" description="GTP cyclohydrolase FolE2">
    <location>
        <begin position="1"/>
        <end position="292"/>
    </location>
</feature>
<feature type="site" description="May be catalytically important" evidence="1">
    <location>
        <position position="176"/>
    </location>
</feature>
<name>GCH4_STAS1</name>
<accession>Q49VB3</accession>
<organism>
    <name type="scientific">Staphylococcus saprophyticus subsp. saprophyticus (strain ATCC 15305 / DSM 20229 / NCIMB 8711 / NCTC 7292 / S-41)</name>
    <dbReference type="NCBI Taxonomy" id="342451"/>
    <lineage>
        <taxon>Bacteria</taxon>
        <taxon>Bacillati</taxon>
        <taxon>Bacillota</taxon>
        <taxon>Bacilli</taxon>
        <taxon>Bacillales</taxon>
        <taxon>Staphylococcaceae</taxon>
        <taxon>Staphylococcus</taxon>
    </lineage>
</organism>
<protein>
    <recommendedName>
        <fullName evidence="1">GTP cyclohydrolase FolE2</fullName>
        <ecNumber evidence="1">3.5.4.16</ecNumber>
    </recommendedName>
</protein>
<sequence>MTEFDLSTREGRWKHFGSVDPIEGTKPTIKEEMKDLQSTHKNFLFEIEEVGIKNLVYPVLVDRFQTAGNFSFSTSLNLDEKGINMSRILESVEKHYHNGIELDFDALYQLLRSLQERMNQNAAGLDVSAKWFFDRFSPITQIKAVGHADVTYGLAIDKQNVTRKEITIEAAVTTLCPCSKEISEYSAHNQRGIVTVKAYINKDIELIDNYKDVILDAMEANASSILYPILKRPDEKSVTERAYENPRFVEDLIRLIAADLVDFDWLDGFDIECRNEESIHQHDAFAKLKYRK</sequence>